<sequence>MENNIDLNVYFCFVNRPCTGGDFVNLDHVRTLRKLGINASILLAGNQSEEIVNSFGSLPVVILNEEIEFSSQDIFIVPEVMQVLYDLASKMTVFPRMIMHNQNPFYTGYGFLSAQHINEHRLERIIVPSSYTKYKLQEIGVTKPIDIIHPYIPDYFKPAEKQREVIQIAFSRRKRSAEFDIFKFYFLSLYSHKHSVNFVNIQGLTREEVAKVMSEAAIFISFAERESLGLMTLEAMASGCHVIGFSGYTDIYNNEVIDDSVGDWIGEGEYTLFAQKVCQAIDDFVNGKMNPKIENGLRLIEQRFRIRHFEQEVKRVYGNIFDYDLENSRS</sequence>
<organism>
    <name type="scientific">Actinobacillus pleuropneumoniae serotype 7 (strain AP76)</name>
    <dbReference type="NCBI Taxonomy" id="537457"/>
    <lineage>
        <taxon>Bacteria</taxon>
        <taxon>Pseudomonadati</taxon>
        <taxon>Pseudomonadota</taxon>
        <taxon>Gammaproteobacteria</taxon>
        <taxon>Pasteurellales</taxon>
        <taxon>Pasteurellaceae</taxon>
        <taxon>Actinobacillus</taxon>
    </lineage>
</organism>
<comment type="function">
    <text evidence="1">Catalyzes the transfer of a glucose moiety from UDP-glucose to another glucose that is N-linked to an asparagine within a peptide or protein. Can act in a repetitive manner, and this way it elongates the N-linked glucose by a glycan chain consisting of several alpha-1-&gt;6 linked glucose residues. Is able to add up to six glucose units in vitro. Cannot use UDP-Gal, UDP-GlcNAc or UDP-GalNAc as a substrate donor.</text>
</comment>
<comment type="cofactor">
    <text evidence="1">Does not require a metal cofactor.</text>
</comment>
<comment type="pathway">
    <text evidence="1">Protein modification; protein glycosylation.</text>
</comment>
<comment type="subcellular location">
    <subcellularLocation>
        <location evidence="3">Cytoplasm</location>
    </subcellularLocation>
</comment>
<comment type="similarity">
    <text evidence="2">Belongs to the glycosyltransferase group 1 family.</text>
</comment>
<gene>
    <name type="ordered locus">APP7_1696</name>
</gene>
<reference key="1">
    <citation type="submission" date="2008-06" db="EMBL/GenBank/DDBJ databases">
        <title>Genome and proteome analysis of A. pleuropneumoniae serotype 7.</title>
        <authorList>
            <person name="Linke B."/>
            <person name="Buettner F."/>
            <person name="Martinez-Arias R."/>
            <person name="Goesmann A."/>
            <person name="Baltes N."/>
            <person name="Tegetmeyer H."/>
            <person name="Singh M."/>
            <person name="Gerlach G.F."/>
        </authorList>
    </citation>
    <scope>NUCLEOTIDE SEQUENCE [LARGE SCALE GENOMIC DNA]</scope>
    <source>
        <strain>AP76</strain>
    </source>
</reference>
<reference key="2">
    <citation type="journal article" date="2011" name="J. Biol. Chem.">
        <title>Cytoplasmic N-glycosyltransferase of Actinobacillus pleuropneumoniae is an inverting enzyme and recognizes the NX(S/T) consensus sequence.</title>
        <authorList>
            <person name="Schwarz F."/>
            <person name="Fan Y.Y."/>
            <person name="Schubert M."/>
            <person name="Aebi M."/>
        </authorList>
    </citation>
    <scope>FUNCTION</scope>
    <scope>CATALYTIC ACTIVITY</scope>
    <scope>SUBSTRATE SPECIFICITY</scope>
    <scope>PATHWAY</scope>
    <scope>COFACTOR</scope>
    <scope>SUBCELLULAR LOCATION</scope>
    <source>
        <strain>AP76</strain>
    </source>
</reference>
<keyword id="KW-0963">Cytoplasm</keyword>
<keyword id="KW-0328">Glycosyltransferase</keyword>
<keyword id="KW-0808">Transferase</keyword>
<protein>
    <recommendedName>
        <fullName>Alpha-1,6-glucosyltransferase</fullName>
        <shortName>alpha6GlcT</shortName>
        <ecNumber>2.4.1.-</ecNumber>
    </recommendedName>
    <alternativeName>
        <fullName>Polymerizing glucosyltransferase</fullName>
    </alternativeName>
</protein>
<proteinExistence type="evidence at protein level"/>
<feature type="chain" id="PRO_0000430339" description="Alpha-1,6-glucosyltransferase">
    <location>
        <begin position="1"/>
        <end position="330"/>
    </location>
</feature>
<accession>B3H2N1</accession>
<name>GTF_ACTP7</name>
<dbReference type="EC" id="2.4.1.-"/>
<dbReference type="EMBL" id="CP001091">
    <property type="protein sequence ID" value="ACE62348.1"/>
    <property type="molecule type" value="Genomic_DNA"/>
</dbReference>
<dbReference type="RefSeq" id="WP_005618105.1">
    <property type="nucleotide sequence ID" value="NC_010939.1"/>
</dbReference>
<dbReference type="SMR" id="B3H2N1"/>
<dbReference type="KEGG" id="apa:APP7_1696"/>
<dbReference type="HOGENOM" id="CLU_840997_0_0_6"/>
<dbReference type="UniPathway" id="UPA00378"/>
<dbReference type="PHI-base" id="PHI:6866"/>
<dbReference type="Proteomes" id="UP000001226">
    <property type="component" value="Chromosome"/>
</dbReference>
<dbReference type="GO" id="GO:0005737">
    <property type="term" value="C:cytoplasm"/>
    <property type="evidence" value="ECO:0007669"/>
    <property type="project" value="UniProtKB-SubCell"/>
</dbReference>
<dbReference type="GO" id="GO:0035251">
    <property type="term" value="F:UDP-glucosyltransferase activity"/>
    <property type="evidence" value="ECO:0000314"/>
    <property type="project" value="UniProtKB"/>
</dbReference>
<dbReference type="GO" id="GO:0018279">
    <property type="term" value="P:protein N-linked glycosylation via asparagine"/>
    <property type="evidence" value="ECO:0000314"/>
    <property type="project" value="UniProtKB"/>
</dbReference>
<dbReference type="Gene3D" id="3.40.50.2000">
    <property type="entry name" value="Glycogen Phosphorylase B"/>
    <property type="match status" value="1"/>
</dbReference>
<dbReference type="Pfam" id="PF13692">
    <property type="entry name" value="Glyco_trans_1_4"/>
    <property type="match status" value="1"/>
</dbReference>
<dbReference type="SUPFAM" id="SSF53756">
    <property type="entry name" value="UDP-Glycosyltransferase/glycogen phosphorylase"/>
    <property type="match status" value="1"/>
</dbReference>
<evidence type="ECO:0000269" key="1">
    <source>
    </source>
</evidence>
<evidence type="ECO:0000305" key="2"/>
<evidence type="ECO:0000305" key="3">
    <source>
    </source>
</evidence>